<comment type="function">
    <text evidence="1">Catalyzes the NADPH-dependent reduction of L-glutamate 5-phosphate into L-glutamate 5-semialdehyde and phosphate. The product spontaneously undergoes cyclization to form 1-pyrroline-5-carboxylate.</text>
</comment>
<comment type="catalytic activity">
    <reaction evidence="1">
        <text>L-glutamate 5-semialdehyde + phosphate + NADP(+) = L-glutamyl 5-phosphate + NADPH + H(+)</text>
        <dbReference type="Rhea" id="RHEA:19541"/>
        <dbReference type="ChEBI" id="CHEBI:15378"/>
        <dbReference type="ChEBI" id="CHEBI:43474"/>
        <dbReference type="ChEBI" id="CHEBI:57783"/>
        <dbReference type="ChEBI" id="CHEBI:58066"/>
        <dbReference type="ChEBI" id="CHEBI:58274"/>
        <dbReference type="ChEBI" id="CHEBI:58349"/>
        <dbReference type="EC" id="1.2.1.41"/>
    </reaction>
</comment>
<comment type="pathway">
    <text evidence="1">Amino-acid biosynthesis; L-proline biosynthesis; L-glutamate 5-semialdehyde from L-glutamate: step 2/2.</text>
</comment>
<comment type="subcellular location">
    <subcellularLocation>
        <location evidence="1">Cytoplasm</location>
    </subcellularLocation>
</comment>
<comment type="similarity">
    <text evidence="1">Belongs to the gamma-glutamyl phosphate reductase family.</text>
</comment>
<comment type="sequence caution" evidence="2">
    <conflict type="erroneous initiation">
        <sequence resource="EMBL-CDS" id="AAL51390"/>
    </conflict>
</comment>
<accession>Q8YJ78</accession>
<proteinExistence type="inferred from homology"/>
<evidence type="ECO:0000255" key="1">
    <source>
        <dbReference type="HAMAP-Rule" id="MF_00412"/>
    </source>
</evidence>
<evidence type="ECO:0000305" key="2"/>
<dbReference type="EC" id="1.2.1.41" evidence="1"/>
<dbReference type="EMBL" id="AE008917">
    <property type="protein sequence ID" value="AAL51390.1"/>
    <property type="status" value="ALT_INIT"/>
    <property type="molecule type" value="Genomic_DNA"/>
</dbReference>
<dbReference type="PIR" id="AC3278">
    <property type="entry name" value="AC3278"/>
</dbReference>
<dbReference type="SMR" id="Q8YJ78"/>
<dbReference type="KEGG" id="bme:BMEI0208"/>
<dbReference type="eggNOG" id="COG0014">
    <property type="taxonomic scope" value="Bacteria"/>
</dbReference>
<dbReference type="UniPathway" id="UPA00098">
    <property type="reaction ID" value="UER00360"/>
</dbReference>
<dbReference type="Proteomes" id="UP000000419">
    <property type="component" value="Chromosome I"/>
</dbReference>
<dbReference type="GO" id="GO:0005737">
    <property type="term" value="C:cytoplasm"/>
    <property type="evidence" value="ECO:0007669"/>
    <property type="project" value="UniProtKB-SubCell"/>
</dbReference>
<dbReference type="GO" id="GO:0004350">
    <property type="term" value="F:glutamate-5-semialdehyde dehydrogenase activity"/>
    <property type="evidence" value="ECO:0007669"/>
    <property type="project" value="UniProtKB-UniRule"/>
</dbReference>
<dbReference type="GO" id="GO:0050661">
    <property type="term" value="F:NADP binding"/>
    <property type="evidence" value="ECO:0007669"/>
    <property type="project" value="InterPro"/>
</dbReference>
<dbReference type="GO" id="GO:0055129">
    <property type="term" value="P:L-proline biosynthetic process"/>
    <property type="evidence" value="ECO:0007669"/>
    <property type="project" value="UniProtKB-UniRule"/>
</dbReference>
<dbReference type="CDD" id="cd07079">
    <property type="entry name" value="ALDH_F18-19_ProA-GPR"/>
    <property type="match status" value="1"/>
</dbReference>
<dbReference type="Gene3D" id="3.40.605.10">
    <property type="entry name" value="Aldehyde Dehydrogenase, Chain A, domain 1"/>
    <property type="match status" value="1"/>
</dbReference>
<dbReference type="Gene3D" id="3.40.309.10">
    <property type="entry name" value="Aldehyde Dehydrogenase, Chain A, domain 2"/>
    <property type="match status" value="1"/>
</dbReference>
<dbReference type="HAMAP" id="MF_00412">
    <property type="entry name" value="ProA"/>
    <property type="match status" value="1"/>
</dbReference>
<dbReference type="InterPro" id="IPR016161">
    <property type="entry name" value="Ald_DH/histidinol_DH"/>
</dbReference>
<dbReference type="InterPro" id="IPR016163">
    <property type="entry name" value="Ald_DH_C"/>
</dbReference>
<dbReference type="InterPro" id="IPR016162">
    <property type="entry name" value="Ald_DH_N"/>
</dbReference>
<dbReference type="InterPro" id="IPR015590">
    <property type="entry name" value="Aldehyde_DH_dom"/>
</dbReference>
<dbReference type="InterPro" id="IPR020593">
    <property type="entry name" value="G-glutamylP_reductase_CS"/>
</dbReference>
<dbReference type="InterPro" id="IPR012134">
    <property type="entry name" value="Glu-5-SA_DH"/>
</dbReference>
<dbReference type="InterPro" id="IPR000965">
    <property type="entry name" value="GPR_dom"/>
</dbReference>
<dbReference type="NCBIfam" id="NF001221">
    <property type="entry name" value="PRK00197.1"/>
    <property type="match status" value="1"/>
</dbReference>
<dbReference type="NCBIfam" id="TIGR00407">
    <property type="entry name" value="proA"/>
    <property type="match status" value="1"/>
</dbReference>
<dbReference type="PANTHER" id="PTHR11063:SF8">
    <property type="entry name" value="DELTA-1-PYRROLINE-5-CARBOXYLATE SYNTHASE"/>
    <property type="match status" value="1"/>
</dbReference>
<dbReference type="PANTHER" id="PTHR11063">
    <property type="entry name" value="GLUTAMATE SEMIALDEHYDE DEHYDROGENASE"/>
    <property type="match status" value="1"/>
</dbReference>
<dbReference type="Pfam" id="PF00171">
    <property type="entry name" value="Aldedh"/>
    <property type="match status" value="1"/>
</dbReference>
<dbReference type="PIRSF" id="PIRSF000151">
    <property type="entry name" value="GPR"/>
    <property type="match status" value="1"/>
</dbReference>
<dbReference type="SUPFAM" id="SSF53720">
    <property type="entry name" value="ALDH-like"/>
    <property type="match status" value="1"/>
</dbReference>
<dbReference type="PROSITE" id="PS01223">
    <property type="entry name" value="PROA"/>
    <property type="match status" value="1"/>
</dbReference>
<reference key="1">
    <citation type="journal article" date="2002" name="Proc. Natl. Acad. Sci. U.S.A.">
        <title>The genome sequence of the facultative intracellular pathogen Brucella melitensis.</title>
        <authorList>
            <person name="DelVecchio V.G."/>
            <person name="Kapatral V."/>
            <person name="Redkar R.J."/>
            <person name="Patra G."/>
            <person name="Mujer C."/>
            <person name="Los T."/>
            <person name="Ivanova N."/>
            <person name="Anderson I."/>
            <person name="Bhattacharyya A."/>
            <person name="Lykidis A."/>
            <person name="Reznik G."/>
            <person name="Jablonski L."/>
            <person name="Larsen N."/>
            <person name="D'Souza M."/>
            <person name="Bernal A."/>
            <person name="Mazur M."/>
            <person name="Goltsman E."/>
            <person name="Selkov E."/>
            <person name="Elzer P.H."/>
            <person name="Hagius S."/>
            <person name="O'Callaghan D."/>
            <person name="Letesson J.-J."/>
            <person name="Haselkorn R."/>
            <person name="Kyrpides N.C."/>
            <person name="Overbeek R."/>
        </authorList>
    </citation>
    <scope>NUCLEOTIDE SEQUENCE [LARGE SCALE GENOMIC DNA]</scope>
    <source>
        <strain>ATCC 23456 / CCUG 17765 / NCTC 10094 / 16M</strain>
    </source>
</reference>
<name>PROA_BRUME</name>
<sequence>MTKDIAQVMAEVGRKAKAAAAPLSIATNEQKNKALNAAADAILEARADILEANRLDLANAEKNGMAASFVDRLTLNEARIDAIAEGIRAIATLPDPVGEVIAEWDRPNGLHIERVRTPLGVIGVIYESRPNVTADAGALCLKAGNAVILRGGSDSAHSSAAIYKALVKGLEAANLPADAIQIVPVTDRAAVGEMLKGLGGAIDVIVPRGGKSLVARVQSEARVPVFAHLEGICHLYIDKSADLDMARRIALDAKMRRTGICGAAETLLVDRAVASTHLAPILGDLAAGGCEIRGSAEVLALYPAAKPATEEDWSTEYLDAIISVALVDGISGAIDHINRYSSHHTEAIVAEDAQTVARFFNEIDSAILLHNASTQFADGGEFGMGAEIGIATGKMHARGPVGVEQLTSFKYRVRGSGQVRG</sequence>
<protein>
    <recommendedName>
        <fullName evidence="1">Gamma-glutamyl phosphate reductase</fullName>
        <shortName evidence="1">GPR</shortName>
        <ecNumber evidence="1">1.2.1.41</ecNumber>
    </recommendedName>
    <alternativeName>
        <fullName evidence="1">Glutamate-5-semialdehyde dehydrogenase</fullName>
    </alternativeName>
    <alternativeName>
        <fullName evidence="1">Glutamyl-gamma-semialdehyde dehydrogenase</fullName>
        <shortName evidence="1">GSA dehydrogenase</shortName>
    </alternativeName>
</protein>
<organism>
    <name type="scientific">Brucella melitensis biotype 1 (strain ATCC 23456 / CCUG 17765 / NCTC 10094 / 16M)</name>
    <dbReference type="NCBI Taxonomy" id="224914"/>
    <lineage>
        <taxon>Bacteria</taxon>
        <taxon>Pseudomonadati</taxon>
        <taxon>Pseudomonadota</taxon>
        <taxon>Alphaproteobacteria</taxon>
        <taxon>Hyphomicrobiales</taxon>
        <taxon>Brucellaceae</taxon>
        <taxon>Brucella/Ochrobactrum group</taxon>
        <taxon>Brucella</taxon>
    </lineage>
</organism>
<gene>
    <name evidence="1" type="primary">proA</name>
    <name type="ordered locus">BMEI0208</name>
</gene>
<feature type="chain" id="PRO_0000189706" description="Gamma-glutamyl phosphate reductase">
    <location>
        <begin position="1"/>
        <end position="421"/>
    </location>
</feature>
<keyword id="KW-0028">Amino-acid biosynthesis</keyword>
<keyword id="KW-0963">Cytoplasm</keyword>
<keyword id="KW-0521">NADP</keyword>
<keyword id="KW-0560">Oxidoreductase</keyword>
<keyword id="KW-0641">Proline biosynthesis</keyword>